<evidence type="ECO:0000255" key="1">
    <source>
        <dbReference type="HAMAP-Rule" id="MF_00195"/>
    </source>
</evidence>
<sequence>MKPVIALIGRPNVGKSTLFNQITKSRDALVADFAGLTRDRKYGDATYQNKSFIVVDTGGIGESEGGIDNYMAEQSKTAINEADIIIFVVDARAGLLASDEQIARELRTLGKKIYLVANKVDGVHAEAALVEFYKLGMGEPLQVAASHGRGVQQMLEDVLQDIPEDENPEEHDKDTGLRLAIIGRPNVGKSTLVNRLLGEDRVVAFDQPGTTRDSIYIPFEREGRKYTLIDTAGVRRKGKVDEMIEKFSIVKTLQAMKDAHVVVVVVDAREGIVEQDLHLIGYALEAGRAMVIAINKWDNMSEYDRKQCKLDVERRFDFIPWARIHLISALHGTGVGELYPSIHRAYESANLKVSPAKLTQILNDATDQHQPPTVQGRRIKMRYAHMGGQNPPTIVIHGNKVDKTPADYRRYLENVFRKVYKLEGTPVKIEFKTSENPFEGRKSQVDERTAARRRRYIQKFKKAEKKFKR</sequence>
<protein>
    <recommendedName>
        <fullName evidence="1">GTPase Der</fullName>
    </recommendedName>
    <alternativeName>
        <fullName evidence="1">GTP-binding protein EngA</fullName>
    </alternativeName>
</protein>
<reference key="1">
    <citation type="journal article" date="2008" name="PLoS ONE">
        <title>Comparative analysis of Acinetobacters: three genomes for three lifestyles.</title>
        <authorList>
            <person name="Vallenet D."/>
            <person name="Nordmann P."/>
            <person name="Barbe V."/>
            <person name="Poirel L."/>
            <person name="Mangenot S."/>
            <person name="Bataille E."/>
            <person name="Dossat C."/>
            <person name="Gas S."/>
            <person name="Kreimeyer A."/>
            <person name="Lenoble P."/>
            <person name="Oztas S."/>
            <person name="Poulain J."/>
            <person name="Segurens B."/>
            <person name="Robert C."/>
            <person name="Abergel C."/>
            <person name="Claverie J.-M."/>
            <person name="Raoult D."/>
            <person name="Medigue C."/>
            <person name="Weissenbach J."/>
            <person name="Cruveiller S."/>
        </authorList>
    </citation>
    <scope>NUCLEOTIDE SEQUENCE [LARGE SCALE GENOMIC DNA]</scope>
    <source>
        <strain>AYE</strain>
    </source>
</reference>
<keyword id="KW-0342">GTP-binding</keyword>
<keyword id="KW-0547">Nucleotide-binding</keyword>
<keyword id="KW-0677">Repeat</keyword>
<keyword id="KW-0690">Ribosome biogenesis</keyword>
<comment type="function">
    <text evidence="1">GTPase that plays an essential role in the late steps of ribosome biogenesis.</text>
</comment>
<comment type="subunit">
    <text evidence="1">Associates with the 50S ribosomal subunit.</text>
</comment>
<comment type="similarity">
    <text evidence="1">Belongs to the TRAFAC class TrmE-Era-EngA-EngB-Septin-like GTPase superfamily. EngA (Der) GTPase family.</text>
</comment>
<proteinExistence type="inferred from homology"/>
<gene>
    <name evidence="1" type="primary">der</name>
    <name type="synonym">engA</name>
    <name type="ordered locus">ABAYE3259</name>
</gene>
<organism>
    <name type="scientific">Acinetobacter baumannii (strain AYE)</name>
    <dbReference type="NCBI Taxonomy" id="509173"/>
    <lineage>
        <taxon>Bacteria</taxon>
        <taxon>Pseudomonadati</taxon>
        <taxon>Pseudomonadota</taxon>
        <taxon>Gammaproteobacteria</taxon>
        <taxon>Moraxellales</taxon>
        <taxon>Moraxellaceae</taxon>
        <taxon>Acinetobacter</taxon>
        <taxon>Acinetobacter calcoaceticus/baumannii complex</taxon>
    </lineage>
</organism>
<dbReference type="EMBL" id="CU459141">
    <property type="protein sequence ID" value="CAM88060.1"/>
    <property type="molecule type" value="Genomic_DNA"/>
</dbReference>
<dbReference type="RefSeq" id="WP_000805592.1">
    <property type="nucleotide sequence ID" value="NZ_JBDGFB010000008.1"/>
</dbReference>
<dbReference type="SMR" id="B0V4V6"/>
<dbReference type="EnsemblBacteria" id="CAM88060">
    <property type="protein sequence ID" value="CAM88060"/>
    <property type="gene ID" value="ABAYE3259"/>
</dbReference>
<dbReference type="GeneID" id="92892509"/>
<dbReference type="KEGG" id="aby:ABAYE3259"/>
<dbReference type="HOGENOM" id="CLU_016077_6_2_6"/>
<dbReference type="GO" id="GO:0005525">
    <property type="term" value="F:GTP binding"/>
    <property type="evidence" value="ECO:0007669"/>
    <property type="project" value="UniProtKB-UniRule"/>
</dbReference>
<dbReference type="GO" id="GO:0043022">
    <property type="term" value="F:ribosome binding"/>
    <property type="evidence" value="ECO:0007669"/>
    <property type="project" value="TreeGrafter"/>
</dbReference>
<dbReference type="GO" id="GO:0042254">
    <property type="term" value="P:ribosome biogenesis"/>
    <property type="evidence" value="ECO:0007669"/>
    <property type="project" value="UniProtKB-KW"/>
</dbReference>
<dbReference type="CDD" id="cd01894">
    <property type="entry name" value="EngA1"/>
    <property type="match status" value="1"/>
</dbReference>
<dbReference type="CDD" id="cd01895">
    <property type="entry name" value="EngA2"/>
    <property type="match status" value="1"/>
</dbReference>
<dbReference type="FunFam" id="3.30.300.20:FF:000004">
    <property type="entry name" value="GTPase Der"/>
    <property type="match status" value="1"/>
</dbReference>
<dbReference type="FunFam" id="3.40.50.300:FF:000040">
    <property type="entry name" value="GTPase Der"/>
    <property type="match status" value="1"/>
</dbReference>
<dbReference type="FunFam" id="3.40.50.300:FF:000057">
    <property type="entry name" value="GTPase Der"/>
    <property type="match status" value="1"/>
</dbReference>
<dbReference type="Gene3D" id="3.30.300.20">
    <property type="match status" value="1"/>
</dbReference>
<dbReference type="Gene3D" id="3.40.50.300">
    <property type="entry name" value="P-loop containing nucleotide triphosphate hydrolases"/>
    <property type="match status" value="2"/>
</dbReference>
<dbReference type="HAMAP" id="MF_00195">
    <property type="entry name" value="GTPase_Der"/>
    <property type="match status" value="1"/>
</dbReference>
<dbReference type="InterPro" id="IPR031166">
    <property type="entry name" value="G_ENGA"/>
</dbReference>
<dbReference type="InterPro" id="IPR006073">
    <property type="entry name" value="GTP-bd"/>
</dbReference>
<dbReference type="InterPro" id="IPR016484">
    <property type="entry name" value="GTPase_Der"/>
</dbReference>
<dbReference type="InterPro" id="IPR032859">
    <property type="entry name" value="KH_dom-like"/>
</dbReference>
<dbReference type="InterPro" id="IPR015946">
    <property type="entry name" value="KH_dom-like_a/b"/>
</dbReference>
<dbReference type="InterPro" id="IPR027417">
    <property type="entry name" value="P-loop_NTPase"/>
</dbReference>
<dbReference type="InterPro" id="IPR005225">
    <property type="entry name" value="Small_GTP-bd"/>
</dbReference>
<dbReference type="NCBIfam" id="TIGR03594">
    <property type="entry name" value="GTPase_EngA"/>
    <property type="match status" value="1"/>
</dbReference>
<dbReference type="NCBIfam" id="TIGR00231">
    <property type="entry name" value="small_GTP"/>
    <property type="match status" value="2"/>
</dbReference>
<dbReference type="PANTHER" id="PTHR43834">
    <property type="entry name" value="GTPASE DER"/>
    <property type="match status" value="1"/>
</dbReference>
<dbReference type="PANTHER" id="PTHR43834:SF6">
    <property type="entry name" value="GTPASE DER"/>
    <property type="match status" value="1"/>
</dbReference>
<dbReference type="Pfam" id="PF14714">
    <property type="entry name" value="KH_dom-like"/>
    <property type="match status" value="1"/>
</dbReference>
<dbReference type="Pfam" id="PF01926">
    <property type="entry name" value="MMR_HSR1"/>
    <property type="match status" value="2"/>
</dbReference>
<dbReference type="PIRSF" id="PIRSF006485">
    <property type="entry name" value="GTP-binding_EngA"/>
    <property type="match status" value="1"/>
</dbReference>
<dbReference type="PRINTS" id="PR00326">
    <property type="entry name" value="GTP1OBG"/>
</dbReference>
<dbReference type="SUPFAM" id="SSF52540">
    <property type="entry name" value="P-loop containing nucleoside triphosphate hydrolases"/>
    <property type="match status" value="2"/>
</dbReference>
<dbReference type="PROSITE" id="PS51712">
    <property type="entry name" value="G_ENGA"/>
    <property type="match status" value="2"/>
</dbReference>
<accession>B0V4V6</accession>
<name>DER_ACIBY</name>
<feature type="chain" id="PRO_1000124335" description="GTPase Der">
    <location>
        <begin position="1"/>
        <end position="469"/>
    </location>
</feature>
<feature type="domain" description="EngA-type G 1">
    <location>
        <begin position="3"/>
        <end position="166"/>
    </location>
</feature>
<feature type="domain" description="EngA-type G 2">
    <location>
        <begin position="177"/>
        <end position="350"/>
    </location>
</feature>
<feature type="domain" description="KH-like" evidence="1">
    <location>
        <begin position="351"/>
        <end position="435"/>
    </location>
</feature>
<feature type="binding site" evidence="1">
    <location>
        <begin position="9"/>
        <end position="16"/>
    </location>
    <ligand>
        <name>GTP</name>
        <dbReference type="ChEBI" id="CHEBI:37565"/>
        <label>1</label>
    </ligand>
</feature>
<feature type="binding site" evidence="1">
    <location>
        <begin position="56"/>
        <end position="60"/>
    </location>
    <ligand>
        <name>GTP</name>
        <dbReference type="ChEBI" id="CHEBI:37565"/>
        <label>1</label>
    </ligand>
</feature>
<feature type="binding site" evidence="1">
    <location>
        <begin position="118"/>
        <end position="121"/>
    </location>
    <ligand>
        <name>GTP</name>
        <dbReference type="ChEBI" id="CHEBI:37565"/>
        <label>1</label>
    </ligand>
</feature>
<feature type="binding site" evidence="1">
    <location>
        <begin position="183"/>
        <end position="190"/>
    </location>
    <ligand>
        <name>GTP</name>
        <dbReference type="ChEBI" id="CHEBI:37565"/>
        <label>2</label>
    </ligand>
</feature>
<feature type="binding site" evidence="1">
    <location>
        <begin position="230"/>
        <end position="234"/>
    </location>
    <ligand>
        <name>GTP</name>
        <dbReference type="ChEBI" id="CHEBI:37565"/>
        <label>2</label>
    </ligand>
</feature>
<feature type="binding site" evidence="1">
    <location>
        <begin position="295"/>
        <end position="298"/>
    </location>
    <ligand>
        <name>GTP</name>
        <dbReference type="ChEBI" id="CHEBI:37565"/>
        <label>2</label>
    </ligand>
</feature>